<gene>
    <name evidence="5 6" type="primary">HIPP42</name>
    <name evidence="9" type="ordered locus">At3g04900</name>
    <name evidence="10" type="ORF">T9J14.15</name>
</gene>
<feature type="chain" id="PRO_0000437857" description="Heavy metal-associated isoprenylated plant protein 42">
    <location>
        <begin position="1"/>
        <end position="205"/>
    </location>
</feature>
<feature type="propeptide" id="PRO_0000437858" description="Removed in mature form" evidence="7">
    <location>
        <begin position="206"/>
        <end position="208"/>
    </location>
</feature>
<feature type="domain" description="HMA" evidence="3">
    <location>
        <begin position="6"/>
        <end position="70"/>
    </location>
</feature>
<feature type="region of interest" description="Disordered" evidence="4">
    <location>
        <begin position="93"/>
        <end position="116"/>
    </location>
</feature>
<feature type="modified residue" description="Cysteine methyl ester" evidence="2">
    <location>
        <position position="205"/>
    </location>
</feature>
<feature type="lipid moiety-binding region" description="S-farnesyl cysteine" evidence="2">
    <location>
        <position position="205"/>
    </location>
</feature>
<protein>
    <recommendedName>
        <fullName evidence="5 6">Heavy metal-associated isoprenylated plant protein 42</fullName>
        <shortName evidence="5 6">AtHIP42</shortName>
    </recommendedName>
</protein>
<proteinExistence type="inferred from homology"/>
<dbReference type="EMBL" id="AC009465">
    <property type="protein sequence ID" value="AAG51419.1"/>
    <property type="molecule type" value="Genomic_DNA"/>
</dbReference>
<dbReference type="EMBL" id="CP002686">
    <property type="protein sequence ID" value="AEE74153.1"/>
    <property type="molecule type" value="Genomic_DNA"/>
</dbReference>
<dbReference type="RefSeq" id="NP_187141.1">
    <property type="nucleotide sequence ID" value="NM_111362.2"/>
</dbReference>
<dbReference type="SMR" id="Q9CAV5"/>
<dbReference type="FunCoup" id="Q9CAV5">
    <property type="interactions" value="22"/>
</dbReference>
<dbReference type="STRING" id="3702.Q9CAV5"/>
<dbReference type="GlyGen" id="Q9CAV5">
    <property type="glycosylation" value="1 site"/>
</dbReference>
<dbReference type="PaxDb" id="3702-AT3G04900.1"/>
<dbReference type="DNASU" id="819650"/>
<dbReference type="EnsemblPlants" id="AT3G04900.1">
    <property type="protein sequence ID" value="AT3G04900.1"/>
    <property type="gene ID" value="AT3G04900"/>
</dbReference>
<dbReference type="GeneID" id="819650"/>
<dbReference type="Gramene" id="AT3G04900.1">
    <property type="protein sequence ID" value="AT3G04900.1"/>
    <property type="gene ID" value="AT3G04900"/>
</dbReference>
<dbReference type="KEGG" id="ath:AT3G04900"/>
<dbReference type="Araport" id="AT3G04900"/>
<dbReference type="TAIR" id="AT3G04900"/>
<dbReference type="eggNOG" id="KOG1603">
    <property type="taxonomic scope" value="Eukaryota"/>
</dbReference>
<dbReference type="HOGENOM" id="CLU_1391955_0_0_1"/>
<dbReference type="InParanoid" id="Q9CAV5"/>
<dbReference type="OMA" id="CCKGCAT"/>
<dbReference type="PRO" id="PR:Q9CAV5"/>
<dbReference type="Proteomes" id="UP000006548">
    <property type="component" value="Chromosome 3"/>
</dbReference>
<dbReference type="ExpressionAtlas" id="Q9CAV5">
    <property type="expression patterns" value="differential"/>
</dbReference>
<dbReference type="GO" id="GO:0046872">
    <property type="term" value="F:metal ion binding"/>
    <property type="evidence" value="ECO:0007669"/>
    <property type="project" value="UniProtKB-KW"/>
</dbReference>
<dbReference type="CDD" id="cd00371">
    <property type="entry name" value="HMA"/>
    <property type="match status" value="1"/>
</dbReference>
<dbReference type="Gene3D" id="3.30.70.100">
    <property type="match status" value="1"/>
</dbReference>
<dbReference type="InterPro" id="IPR006121">
    <property type="entry name" value="HMA_dom"/>
</dbReference>
<dbReference type="InterPro" id="IPR036163">
    <property type="entry name" value="HMA_dom_sf"/>
</dbReference>
<dbReference type="PANTHER" id="PTHR45868">
    <property type="entry name" value="HEAVY METAL-ASSOCIATED ISOPRENYLATED PLANT PROTEIN 33-RELATED"/>
    <property type="match status" value="1"/>
</dbReference>
<dbReference type="PANTHER" id="PTHR45868:SF47">
    <property type="entry name" value="HEAVY METAL-ASSOCIATED ISOPRENYLATED PLANT PROTEIN 42"/>
    <property type="match status" value="1"/>
</dbReference>
<dbReference type="SUPFAM" id="SSF55008">
    <property type="entry name" value="HMA, heavy metal-associated domain"/>
    <property type="match status" value="1"/>
</dbReference>
<dbReference type="PROSITE" id="PS50846">
    <property type="entry name" value="HMA_2"/>
    <property type="match status" value="1"/>
</dbReference>
<organism>
    <name type="scientific">Arabidopsis thaliana</name>
    <name type="common">Mouse-ear cress</name>
    <dbReference type="NCBI Taxonomy" id="3702"/>
    <lineage>
        <taxon>Eukaryota</taxon>
        <taxon>Viridiplantae</taxon>
        <taxon>Streptophyta</taxon>
        <taxon>Embryophyta</taxon>
        <taxon>Tracheophyta</taxon>
        <taxon>Spermatophyta</taxon>
        <taxon>Magnoliopsida</taxon>
        <taxon>eudicotyledons</taxon>
        <taxon>Gunneridae</taxon>
        <taxon>Pentapetalae</taxon>
        <taxon>rosids</taxon>
        <taxon>malvids</taxon>
        <taxon>Brassicales</taxon>
        <taxon>Brassicaceae</taxon>
        <taxon>Camelineae</taxon>
        <taxon>Arabidopsis</taxon>
    </lineage>
</organism>
<accession>Q9CAV5</accession>
<evidence type="ECO:0000250" key="1">
    <source>
        <dbReference type="UniProtKB" id="Q9LZF1"/>
    </source>
</evidence>
<evidence type="ECO:0000250" key="2">
    <source>
        <dbReference type="UniProtKB" id="Q9SZN7"/>
    </source>
</evidence>
<evidence type="ECO:0000255" key="3">
    <source>
        <dbReference type="PROSITE-ProRule" id="PRU00280"/>
    </source>
</evidence>
<evidence type="ECO:0000256" key="4">
    <source>
        <dbReference type="SAM" id="MobiDB-lite"/>
    </source>
</evidence>
<evidence type="ECO:0000303" key="5">
    <source>
    </source>
</evidence>
<evidence type="ECO:0000303" key="6">
    <source>
    </source>
</evidence>
<evidence type="ECO:0000305" key="7"/>
<evidence type="ECO:0000305" key="8">
    <source>
    </source>
</evidence>
<evidence type="ECO:0000312" key="9">
    <source>
        <dbReference type="Araport" id="AT3G04900"/>
    </source>
</evidence>
<evidence type="ECO:0000312" key="10">
    <source>
        <dbReference type="EMBL" id="AAG51419.1"/>
    </source>
</evidence>
<keyword id="KW-0449">Lipoprotein</keyword>
<keyword id="KW-0479">Metal-binding</keyword>
<keyword id="KW-0488">Methylation</keyword>
<keyword id="KW-0636">Prenylation</keyword>
<keyword id="KW-1185">Reference proteome</keyword>
<sequence length="208" mass="23043">MEDLDFPICILKMNLQCCEDFPSRVKKLLRQVKGVYAITIDPVKGLILVCGTAEPSVLIKAVAKLGQSPQLYAYEKDPATAKTRFRTLLKRYATNKTQDKPSPPAPPVTATTPVETCPAGGETFRGFGYPGPTTMMQMPAFSLPPPRGLPGWLAPPTNPRLKYEEPKVTPRKPPAPYPFDYYENLGFPPSDSLFNYFSDDNPQPCSIM</sequence>
<reference key="1">
    <citation type="journal article" date="2000" name="Nature">
        <title>Sequence and analysis of chromosome 3 of the plant Arabidopsis thaliana.</title>
        <authorList>
            <person name="Salanoubat M."/>
            <person name="Lemcke K."/>
            <person name="Rieger M."/>
            <person name="Ansorge W."/>
            <person name="Unseld M."/>
            <person name="Fartmann B."/>
            <person name="Valle G."/>
            <person name="Bloecker H."/>
            <person name="Perez-Alonso M."/>
            <person name="Obermaier B."/>
            <person name="Delseny M."/>
            <person name="Boutry M."/>
            <person name="Grivell L.A."/>
            <person name="Mache R."/>
            <person name="Puigdomenech P."/>
            <person name="De Simone V."/>
            <person name="Choisne N."/>
            <person name="Artiguenave F."/>
            <person name="Robert C."/>
            <person name="Brottier P."/>
            <person name="Wincker P."/>
            <person name="Cattolico L."/>
            <person name="Weissenbach J."/>
            <person name="Saurin W."/>
            <person name="Quetier F."/>
            <person name="Schaefer M."/>
            <person name="Mueller-Auer S."/>
            <person name="Gabel C."/>
            <person name="Fuchs M."/>
            <person name="Benes V."/>
            <person name="Wurmbach E."/>
            <person name="Drzonek H."/>
            <person name="Erfle H."/>
            <person name="Jordan N."/>
            <person name="Bangert S."/>
            <person name="Wiedelmann R."/>
            <person name="Kranz H."/>
            <person name="Voss H."/>
            <person name="Holland R."/>
            <person name="Brandt P."/>
            <person name="Nyakatura G."/>
            <person name="Vezzi A."/>
            <person name="D'Angelo M."/>
            <person name="Pallavicini A."/>
            <person name="Toppo S."/>
            <person name="Simionati B."/>
            <person name="Conrad A."/>
            <person name="Hornischer K."/>
            <person name="Kauer G."/>
            <person name="Loehnert T.-H."/>
            <person name="Nordsiek G."/>
            <person name="Reichelt J."/>
            <person name="Scharfe M."/>
            <person name="Schoen O."/>
            <person name="Bargues M."/>
            <person name="Terol J."/>
            <person name="Climent J."/>
            <person name="Navarro P."/>
            <person name="Collado C."/>
            <person name="Perez-Perez A."/>
            <person name="Ottenwaelder B."/>
            <person name="Duchemin D."/>
            <person name="Cooke R."/>
            <person name="Laudie M."/>
            <person name="Berger-Llauro C."/>
            <person name="Purnelle B."/>
            <person name="Masuy D."/>
            <person name="de Haan M."/>
            <person name="Maarse A.C."/>
            <person name="Alcaraz J.-P."/>
            <person name="Cottet A."/>
            <person name="Casacuberta E."/>
            <person name="Monfort A."/>
            <person name="Argiriou A."/>
            <person name="Flores M."/>
            <person name="Liguori R."/>
            <person name="Vitale D."/>
            <person name="Mannhaupt G."/>
            <person name="Haase D."/>
            <person name="Schoof H."/>
            <person name="Rudd S."/>
            <person name="Zaccaria P."/>
            <person name="Mewes H.-W."/>
            <person name="Mayer K.F.X."/>
            <person name="Kaul S."/>
            <person name="Town C.D."/>
            <person name="Koo H.L."/>
            <person name="Tallon L.J."/>
            <person name="Jenkins J."/>
            <person name="Rooney T."/>
            <person name="Rizzo M."/>
            <person name="Walts A."/>
            <person name="Utterback T."/>
            <person name="Fujii C.Y."/>
            <person name="Shea T.P."/>
            <person name="Creasy T.H."/>
            <person name="Haas B."/>
            <person name="Maiti R."/>
            <person name="Wu D."/>
            <person name="Peterson J."/>
            <person name="Van Aken S."/>
            <person name="Pai G."/>
            <person name="Militscher J."/>
            <person name="Sellers P."/>
            <person name="Gill J.E."/>
            <person name="Feldblyum T.V."/>
            <person name="Preuss D."/>
            <person name="Lin X."/>
            <person name="Nierman W.C."/>
            <person name="Salzberg S.L."/>
            <person name="White O."/>
            <person name="Venter J.C."/>
            <person name="Fraser C.M."/>
            <person name="Kaneko T."/>
            <person name="Nakamura Y."/>
            <person name="Sato S."/>
            <person name="Kato T."/>
            <person name="Asamizu E."/>
            <person name="Sasamoto S."/>
            <person name="Kimura T."/>
            <person name="Idesawa K."/>
            <person name="Kawashima K."/>
            <person name="Kishida Y."/>
            <person name="Kiyokawa C."/>
            <person name="Kohara M."/>
            <person name="Matsumoto M."/>
            <person name="Matsuno A."/>
            <person name="Muraki A."/>
            <person name="Nakayama S."/>
            <person name="Nakazaki N."/>
            <person name="Shinpo S."/>
            <person name="Takeuchi C."/>
            <person name="Wada T."/>
            <person name="Watanabe A."/>
            <person name="Yamada M."/>
            <person name="Yasuda M."/>
            <person name="Tabata S."/>
        </authorList>
    </citation>
    <scope>NUCLEOTIDE SEQUENCE [LARGE SCALE GENOMIC DNA]</scope>
    <source>
        <strain>cv. Columbia</strain>
    </source>
</reference>
<reference key="2">
    <citation type="journal article" date="2017" name="Plant J.">
        <title>Araport11: a complete reannotation of the Arabidopsis thaliana reference genome.</title>
        <authorList>
            <person name="Cheng C.Y."/>
            <person name="Krishnakumar V."/>
            <person name="Chan A.P."/>
            <person name="Thibaud-Nissen F."/>
            <person name="Schobel S."/>
            <person name="Town C.D."/>
        </authorList>
    </citation>
    <scope>GENOME REANNOTATION</scope>
    <source>
        <strain>cv. Columbia</strain>
    </source>
</reference>
<reference key="3">
    <citation type="journal article" date="2010" name="Metallomics">
        <title>Metallochaperone-like genes in Arabidopsis thaliana.</title>
        <authorList>
            <person name="Tehseen M."/>
            <person name="Cairns N."/>
            <person name="Sherson S."/>
            <person name="Cobbett C.S."/>
        </authorList>
    </citation>
    <scope>GENE FAMILY</scope>
    <scope>NOMENCLATURE</scope>
</reference>
<reference key="4">
    <citation type="journal article" date="2013" name="FEBS J.">
        <title>Heavy metal-associated isoprenylated plant protein (HIPP): characterization of a family of proteins exclusive to plants.</title>
        <authorList>
            <person name="de Abreu-Neto J.B."/>
            <person name="Turchetto-Zolet A.C."/>
            <person name="de Oliveira L.F."/>
            <person name="Zanettini M.H."/>
            <person name="Margis-Pinheiro M."/>
        </authorList>
    </citation>
    <scope>GENE FAMILY</scope>
    <scope>NOMENCLATURE</scope>
</reference>
<comment type="function">
    <text evidence="1">Probable heavy-metal-binding protein.</text>
</comment>
<comment type="similarity">
    <text evidence="7">Belongs to the HIPP family.</text>
</comment>
<comment type="caution">
    <text evidence="8">The HMA domain lacks the core conserved Cys-X-X-Cys motif.</text>
</comment>
<name>HIP42_ARATH</name>